<feature type="chain" id="PRO_0000403324" description="PTI1-like tyrosine-protein kinase 3">
    <location>
        <begin position="1"/>
        <end position="408"/>
    </location>
</feature>
<feature type="domain" description="Protein kinase" evidence="1">
    <location>
        <begin position="113"/>
        <end position="395"/>
    </location>
</feature>
<feature type="region of interest" description="Disordered" evidence="3">
    <location>
        <begin position="59"/>
        <end position="91"/>
    </location>
</feature>
<feature type="compositionally biased region" description="Basic and acidic residues" evidence="3">
    <location>
        <begin position="59"/>
        <end position="76"/>
    </location>
</feature>
<feature type="active site" description="Proton acceptor" evidence="1 2">
    <location>
        <position position="245"/>
    </location>
</feature>
<feature type="binding site" evidence="1">
    <location>
        <begin position="119"/>
        <end position="127"/>
    </location>
    <ligand>
        <name>ATP</name>
        <dbReference type="ChEBI" id="CHEBI:30616"/>
    </ligand>
</feature>
<feature type="binding site" evidence="1">
    <location>
        <position position="141"/>
    </location>
    <ligand>
        <name>ATP</name>
        <dbReference type="ChEBI" id="CHEBI:30616"/>
    </ligand>
</feature>
<feature type="splice variant" id="VSP_040369" description="In isoform 2." evidence="5">
    <location>
        <begin position="1"/>
        <end position="42"/>
    </location>
</feature>
<keyword id="KW-0025">Alternative splicing</keyword>
<keyword id="KW-0067">ATP-binding</keyword>
<keyword id="KW-1003">Cell membrane</keyword>
<keyword id="KW-0418">Kinase</keyword>
<keyword id="KW-0472">Membrane</keyword>
<keyword id="KW-0547">Nucleotide-binding</keyword>
<keyword id="KW-0597">Phosphoprotein</keyword>
<keyword id="KW-1185">Reference proteome</keyword>
<keyword id="KW-0808">Transferase</keyword>
<keyword id="KW-0829">Tyrosine-protein kinase</keyword>
<sequence length="408" mass="45658">MYPMDSDYHRRGLVANDRSPAQFVRLDKPRAVDDLYIGKREKMRRWLCCACHVEEPYHSSENEHLRSPKHHNDFGHHTRKPQAAVKPDALKEPPSIDVPALSLDELKEKTDNFGSKSLIGEGSYGRAYYATLKDGKAVAVKKLDNAAEPESNVEFLTQVSRVSKLKHDNFVELFGYCVEGNFRILAYEFATMGSLHDILHGRKGVQGAQPGPTLDWIQRVRIAVDAARGLEYLHEKVQPAVIHRDIRSSNVLLFEDFKAKIADFNLSNQSPDMAARLHSTRVLGTFGYHAPEYAMTGQLTQKSDVYSFGVVLLELLTGRKPVDHTMPRGQQSLVTWATPRLSEDKVKQCVDPKLKGEYPPKAVAKLAAVAALCVQYESEFRPNMSIVVKALQPLLRSSTAAAVPVQEA</sequence>
<organism>
    <name type="scientific">Arabidopsis thaliana</name>
    <name type="common">Mouse-ear cress</name>
    <dbReference type="NCBI Taxonomy" id="3702"/>
    <lineage>
        <taxon>Eukaryota</taxon>
        <taxon>Viridiplantae</taxon>
        <taxon>Streptophyta</taxon>
        <taxon>Embryophyta</taxon>
        <taxon>Tracheophyta</taxon>
        <taxon>Spermatophyta</taxon>
        <taxon>Magnoliopsida</taxon>
        <taxon>eudicotyledons</taxon>
        <taxon>Gunneridae</taxon>
        <taxon>Pentapetalae</taxon>
        <taxon>rosids</taxon>
        <taxon>malvids</taxon>
        <taxon>Brassicales</taxon>
        <taxon>Brassicaceae</taxon>
        <taxon>Camelineae</taxon>
        <taxon>Arabidopsis</taxon>
    </lineage>
</organism>
<evidence type="ECO:0000255" key="1">
    <source>
        <dbReference type="PROSITE-ProRule" id="PRU00159"/>
    </source>
</evidence>
<evidence type="ECO:0000255" key="2">
    <source>
        <dbReference type="PROSITE-ProRule" id="PRU10028"/>
    </source>
</evidence>
<evidence type="ECO:0000256" key="3">
    <source>
        <dbReference type="SAM" id="MobiDB-lite"/>
    </source>
</evidence>
<evidence type="ECO:0000269" key="4">
    <source>
    </source>
</evidence>
<evidence type="ECO:0000303" key="5">
    <source>
    </source>
</evidence>
<evidence type="ECO:0000305" key="6"/>
<evidence type="ECO:0000305" key="7">
    <source>
    </source>
</evidence>
<accession>B9DFG5</accession>
<accession>B9DHY7</accession>
<accession>Q940H1</accession>
<accession>Q9LX36</accession>
<dbReference type="EC" id="2.7.10.2"/>
<dbReference type="EMBL" id="AL356014">
    <property type="protein sequence ID" value="CAB91605.1"/>
    <property type="status" value="ALT_SEQ"/>
    <property type="molecule type" value="Genomic_DNA"/>
</dbReference>
<dbReference type="EMBL" id="CP002686">
    <property type="protein sequence ID" value="AEE79908.1"/>
    <property type="molecule type" value="Genomic_DNA"/>
</dbReference>
<dbReference type="EMBL" id="CP002686">
    <property type="protein sequence ID" value="AEE79909.1"/>
    <property type="molecule type" value="Genomic_DNA"/>
</dbReference>
<dbReference type="EMBL" id="CP002686">
    <property type="protein sequence ID" value="AEE79910.1"/>
    <property type="molecule type" value="Genomic_DNA"/>
</dbReference>
<dbReference type="EMBL" id="AY054639">
    <property type="protein sequence ID" value="AAK96830.1"/>
    <property type="molecule type" value="mRNA"/>
</dbReference>
<dbReference type="EMBL" id="BT008449">
    <property type="protein sequence ID" value="AAP37808.1"/>
    <property type="molecule type" value="mRNA"/>
</dbReference>
<dbReference type="EMBL" id="AK316761">
    <property type="protein sequence ID" value="BAH19482.1"/>
    <property type="molecule type" value="mRNA"/>
</dbReference>
<dbReference type="EMBL" id="AK317695">
    <property type="protein sequence ID" value="BAH20354.1"/>
    <property type="molecule type" value="mRNA"/>
</dbReference>
<dbReference type="PIR" id="T49003">
    <property type="entry name" value="T49003"/>
</dbReference>
<dbReference type="RefSeq" id="NP_001030893.1">
    <molecule id="B9DFG5-1"/>
    <property type="nucleotide sequence ID" value="NM_001035816.1"/>
</dbReference>
<dbReference type="RefSeq" id="NP_567082.2">
    <molecule id="B9DFG5-1"/>
    <property type="nucleotide sequence ID" value="NM_115797.6"/>
</dbReference>
<dbReference type="RefSeq" id="NP_850720.1">
    <molecule id="B9DFG5-2"/>
    <property type="nucleotide sequence ID" value="NM_180389.3"/>
</dbReference>
<dbReference type="SMR" id="B9DFG5"/>
<dbReference type="BioGRID" id="10419">
    <property type="interactions" value="3"/>
</dbReference>
<dbReference type="FunCoup" id="B9DFG5">
    <property type="interactions" value="232"/>
</dbReference>
<dbReference type="IntAct" id="B9DFG5">
    <property type="interactions" value="2"/>
</dbReference>
<dbReference type="STRING" id="3702.B9DFG5"/>
<dbReference type="iPTMnet" id="B9DFG5"/>
<dbReference type="SwissPalm" id="B9DFG5"/>
<dbReference type="PaxDb" id="3702-AT3G59350.1"/>
<dbReference type="EnsemblPlants" id="AT3G59350.1">
    <molecule id="B9DFG5-1"/>
    <property type="protein sequence ID" value="AT3G59350.1"/>
    <property type="gene ID" value="AT3G59350"/>
</dbReference>
<dbReference type="EnsemblPlants" id="AT3G59350.2">
    <molecule id="B9DFG5-2"/>
    <property type="protein sequence ID" value="AT3G59350.2"/>
    <property type="gene ID" value="AT3G59350"/>
</dbReference>
<dbReference type="EnsemblPlants" id="AT3G59350.3">
    <molecule id="B9DFG5-1"/>
    <property type="protein sequence ID" value="AT3G59350.3"/>
    <property type="gene ID" value="AT3G59350"/>
</dbReference>
<dbReference type="GeneID" id="825104"/>
<dbReference type="Gramene" id="AT3G59350.1">
    <molecule id="B9DFG5-1"/>
    <property type="protein sequence ID" value="AT3G59350.1"/>
    <property type="gene ID" value="AT3G59350"/>
</dbReference>
<dbReference type="Gramene" id="AT3G59350.2">
    <molecule id="B9DFG5-2"/>
    <property type="protein sequence ID" value="AT3G59350.2"/>
    <property type="gene ID" value="AT3G59350"/>
</dbReference>
<dbReference type="Gramene" id="AT3G59350.3">
    <molecule id="B9DFG5-1"/>
    <property type="protein sequence ID" value="AT3G59350.3"/>
    <property type="gene ID" value="AT3G59350"/>
</dbReference>
<dbReference type="KEGG" id="ath:AT3G59350"/>
<dbReference type="Araport" id="AT3G59350"/>
<dbReference type="TAIR" id="AT3G59350"/>
<dbReference type="eggNOG" id="KOG1187">
    <property type="taxonomic scope" value="Eukaryota"/>
</dbReference>
<dbReference type="InParanoid" id="B9DFG5"/>
<dbReference type="OrthoDB" id="4062651at2759"/>
<dbReference type="PhylomeDB" id="B9DFG5"/>
<dbReference type="PRO" id="PR:B9DFG5"/>
<dbReference type="Proteomes" id="UP000006548">
    <property type="component" value="Chromosome 3"/>
</dbReference>
<dbReference type="ExpressionAtlas" id="B9DFG5">
    <property type="expression patterns" value="baseline and differential"/>
</dbReference>
<dbReference type="GO" id="GO:0005829">
    <property type="term" value="C:cytosol"/>
    <property type="evidence" value="ECO:0007005"/>
    <property type="project" value="TAIR"/>
</dbReference>
<dbReference type="GO" id="GO:0005886">
    <property type="term" value="C:plasma membrane"/>
    <property type="evidence" value="ECO:0000353"/>
    <property type="project" value="TAIR"/>
</dbReference>
<dbReference type="GO" id="GO:0005524">
    <property type="term" value="F:ATP binding"/>
    <property type="evidence" value="ECO:0007669"/>
    <property type="project" value="UniProtKB-KW"/>
</dbReference>
<dbReference type="GO" id="GO:0004715">
    <property type="term" value="F:non-membrane spanning protein tyrosine kinase activity"/>
    <property type="evidence" value="ECO:0007669"/>
    <property type="project" value="UniProtKB-EC"/>
</dbReference>
<dbReference type="GO" id="GO:0019901">
    <property type="term" value="F:protein kinase binding"/>
    <property type="evidence" value="ECO:0000353"/>
    <property type="project" value="UniProtKB"/>
</dbReference>
<dbReference type="GO" id="GO:0010375">
    <property type="term" value="P:stomatal complex patterning"/>
    <property type="evidence" value="ECO:0000316"/>
    <property type="project" value="TAIR"/>
</dbReference>
<dbReference type="FunFam" id="1.10.510.10:FF:000103">
    <property type="entry name" value="PTI1-like tyrosine-protein kinase 3"/>
    <property type="match status" value="1"/>
</dbReference>
<dbReference type="FunFam" id="3.30.200.20:FF:000182">
    <property type="entry name" value="PTI1-like tyrosine-protein kinase 3"/>
    <property type="match status" value="1"/>
</dbReference>
<dbReference type="Gene3D" id="3.30.200.20">
    <property type="entry name" value="Phosphorylase Kinase, domain 1"/>
    <property type="match status" value="1"/>
</dbReference>
<dbReference type="Gene3D" id="1.10.510.10">
    <property type="entry name" value="Transferase(Phosphotransferase) domain 1"/>
    <property type="match status" value="1"/>
</dbReference>
<dbReference type="InterPro" id="IPR011009">
    <property type="entry name" value="Kinase-like_dom_sf"/>
</dbReference>
<dbReference type="InterPro" id="IPR052101">
    <property type="entry name" value="Plant_StressResp_Kinase"/>
</dbReference>
<dbReference type="InterPro" id="IPR000719">
    <property type="entry name" value="Prot_kinase_dom"/>
</dbReference>
<dbReference type="InterPro" id="IPR017441">
    <property type="entry name" value="Protein_kinase_ATP_BS"/>
</dbReference>
<dbReference type="InterPro" id="IPR001245">
    <property type="entry name" value="Ser-Thr/Tyr_kinase_cat_dom"/>
</dbReference>
<dbReference type="InterPro" id="IPR008266">
    <property type="entry name" value="Tyr_kinase_AS"/>
</dbReference>
<dbReference type="InterPro" id="IPR020635">
    <property type="entry name" value="Tyr_kinase_cat_dom"/>
</dbReference>
<dbReference type="PANTHER" id="PTHR47983:SF4">
    <property type="entry name" value="PTI1-LIKE TYROSINE-PROTEIN KINASE 3"/>
    <property type="match status" value="1"/>
</dbReference>
<dbReference type="PANTHER" id="PTHR47983">
    <property type="entry name" value="PTO-INTERACTING PROTEIN 1-LIKE"/>
    <property type="match status" value="1"/>
</dbReference>
<dbReference type="Pfam" id="PF07714">
    <property type="entry name" value="PK_Tyr_Ser-Thr"/>
    <property type="match status" value="1"/>
</dbReference>
<dbReference type="SMART" id="SM00219">
    <property type="entry name" value="TyrKc"/>
    <property type="match status" value="1"/>
</dbReference>
<dbReference type="SUPFAM" id="SSF56112">
    <property type="entry name" value="Protein kinase-like (PK-like)"/>
    <property type="match status" value="1"/>
</dbReference>
<dbReference type="PROSITE" id="PS00107">
    <property type="entry name" value="PROTEIN_KINASE_ATP"/>
    <property type="match status" value="1"/>
</dbReference>
<dbReference type="PROSITE" id="PS50011">
    <property type="entry name" value="PROTEIN_KINASE_DOM"/>
    <property type="match status" value="1"/>
</dbReference>
<dbReference type="PROSITE" id="PS00109">
    <property type="entry name" value="PROTEIN_KINASE_TYR"/>
    <property type="match status" value="1"/>
</dbReference>
<name>PTI13_ARATH</name>
<comment type="catalytic activity">
    <reaction evidence="2">
        <text>L-tyrosyl-[protein] + ATP = O-phospho-L-tyrosyl-[protein] + ADP + H(+)</text>
        <dbReference type="Rhea" id="RHEA:10596"/>
        <dbReference type="Rhea" id="RHEA-COMP:10136"/>
        <dbReference type="Rhea" id="RHEA-COMP:20101"/>
        <dbReference type="ChEBI" id="CHEBI:15378"/>
        <dbReference type="ChEBI" id="CHEBI:30616"/>
        <dbReference type="ChEBI" id="CHEBI:46858"/>
        <dbReference type="ChEBI" id="CHEBI:61978"/>
        <dbReference type="ChEBI" id="CHEBI:456216"/>
        <dbReference type="EC" id="2.7.10.2"/>
    </reaction>
</comment>
<comment type="subunit">
    <text evidence="4">Interacts with OXI1.</text>
</comment>
<comment type="subcellular location">
    <subcellularLocation>
        <location evidence="7">Cell membrane</location>
        <topology evidence="7">Peripheral membrane protein</topology>
    </subcellularLocation>
</comment>
<comment type="alternative products">
    <event type="alternative splicing"/>
    <isoform>
        <id>B9DFG5-1</id>
        <name>1</name>
        <sequence type="displayed"/>
    </isoform>
    <isoform>
        <id>B9DFG5-2</id>
        <name>2</name>
        <sequence type="described" ref="VSP_040369"/>
    </isoform>
</comment>
<comment type="PTM">
    <text evidence="4">Phosphorylated by OXI1.</text>
</comment>
<comment type="similarity">
    <text evidence="1">Belongs to the protein kinase superfamily. Tyr protein kinase family.</text>
</comment>
<comment type="sequence caution" evidence="6">
    <conflict type="erroneous gene model prediction">
        <sequence resource="EMBL-CDS" id="CAB91605"/>
    </conflict>
</comment>
<comment type="online information" name="Arabidopsis protein tyrosine kinases">
    <link uri="http://www.bio.unipd.it/molbinfo/PTKtable.html"/>
</comment>
<proteinExistence type="evidence at protein level"/>
<gene>
    <name type="primary">PTI13</name>
    <name type="ordered locus">At3g59350</name>
    <name type="ORF">F25L23.210</name>
</gene>
<reference key="1">
    <citation type="journal article" date="2000" name="Nature">
        <title>Sequence and analysis of chromosome 3 of the plant Arabidopsis thaliana.</title>
        <authorList>
            <person name="Salanoubat M."/>
            <person name="Lemcke K."/>
            <person name="Rieger M."/>
            <person name="Ansorge W."/>
            <person name="Unseld M."/>
            <person name="Fartmann B."/>
            <person name="Valle G."/>
            <person name="Bloecker H."/>
            <person name="Perez-Alonso M."/>
            <person name="Obermaier B."/>
            <person name="Delseny M."/>
            <person name="Boutry M."/>
            <person name="Grivell L.A."/>
            <person name="Mache R."/>
            <person name="Puigdomenech P."/>
            <person name="De Simone V."/>
            <person name="Choisne N."/>
            <person name="Artiguenave F."/>
            <person name="Robert C."/>
            <person name="Brottier P."/>
            <person name="Wincker P."/>
            <person name="Cattolico L."/>
            <person name="Weissenbach J."/>
            <person name="Saurin W."/>
            <person name="Quetier F."/>
            <person name="Schaefer M."/>
            <person name="Mueller-Auer S."/>
            <person name="Gabel C."/>
            <person name="Fuchs M."/>
            <person name="Benes V."/>
            <person name="Wurmbach E."/>
            <person name="Drzonek H."/>
            <person name="Erfle H."/>
            <person name="Jordan N."/>
            <person name="Bangert S."/>
            <person name="Wiedelmann R."/>
            <person name="Kranz H."/>
            <person name="Voss H."/>
            <person name="Holland R."/>
            <person name="Brandt P."/>
            <person name="Nyakatura G."/>
            <person name="Vezzi A."/>
            <person name="D'Angelo M."/>
            <person name="Pallavicini A."/>
            <person name="Toppo S."/>
            <person name="Simionati B."/>
            <person name="Conrad A."/>
            <person name="Hornischer K."/>
            <person name="Kauer G."/>
            <person name="Loehnert T.-H."/>
            <person name="Nordsiek G."/>
            <person name="Reichelt J."/>
            <person name="Scharfe M."/>
            <person name="Schoen O."/>
            <person name="Bargues M."/>
            <person name="Terol J."/>
            <person name="Climent J."/>
            <person name="Navarro P."/>
            <person name="Collado C."/>
            <person name="Perez-Perez A."/>
            <person name="Ottenwaelder B."/>
            <person name="Duchemin D."/>
            <person name="Cooke R."/>
            <person name="Laudie M."/>
            <person name="Berger-Llauro C."/>
            <person name="Purnelle B."/>
            <person name="Masuy D."/>
            <person name="de Haan M."/>
            <person name="Maarse A.C."/>
            <person name="Alcaraz J.-P."/>
            <person name="Cottet A."/>
            <person name="Casacuberta E."/>
            <person name="Monfort A."/>
            <person name="Argiriou A."/>
            <person name="Flores M."/>
            <person name="Liguori R."/>
            <person name="Vitale D."/>
            <person name="Mannhaupt G."/>
            <person name="Haase D."/>
            <person name="Schoof H."/>
            <person name="Rudd S."/>
            <person name="Zaccaria P."/>
            <person name="Mewes H.-W."/>
            <person name="Mayer K.F.X."/>
            <person name="Kaul S."/>
            <person name="Town C.D."/>
            <person name="Koo H.L."/>
            <person name="Tallon L.J."/>
            <person name="Jenkins J."/>
            <person name="Rooney T."/>
            <person name="Rizzo M."/>
            <person name="Walts A."/>
            <person name="Utterback T."/>
            <person name="Fujii C.Y."/>
            <person name="Shea T.P."/>
            <person name="Creasy T.H."/>
            <person name="Haas B."/>
            <person name="Maiti R."/>
            <person name="Wu D."/>
            <person name="Peterson J."/>
            <person name="Van Aken S."/>
            <person name="Pai G."/>
            <person name="Militscher J."/>
            <person name="Sellers P."/>
            <person name="Gill J.E."/>
            <person name="Feldblyum T.V."/>
            <person name="Preuss D."/>
            <person name="Lin X."/>
            <person name="Nierman W.C."/>
            <person name="Salzberg S.L."/>
            <person name="White O."/>
            <person name="Venter J.C."/>
            <person name="Fraser C.M."/>
            <person name="Kaneko T."/>
            <person name="Nakamura Y."/>
            <person name="Sato S."/>
            <person name="Kato T."/>
            <person name="Asamizu E."/>
            <person name="Sasamoto S."/>
            <person name="Kimura T."/>
            <person name="Idesawa K."/>
            <person name="Kawashima K."/>
            <person name="Kishida Y."/>
            <person name="Kiyokawa C."/>
            <person name="Kohara M."/>
            <person name="Matsumoto M."/>
            <person name="Matsuno A."/>
            <person name="Muraki A."/>
            <person name="Nakayama S."/>
            <person name="Nakazaki N."/>
            <person name="Shinpo S."/>
            <person name="Takeuchi C."/>
            <person name="Wada T."/>
            <person name="Watanabe A."/>
            <person name="Yamada M."/>
            <person name="Yasuda M."/>
            <person name="Tabata S."/>
        </authorList>
    </citation>
    <scope>NUCLEOTIDE SEQUENCE [LARGE SCALE GENOMIC DNA]</scope>
    <source>
        <strain>cv. Columbia</strain>
    </source>
</reference>
<reference key="2">
    <citation type="journal article" date="2017" name="Plant J.">
        <title>Araport11: a complete reannotation of the Arabidopsis thaliana reference genome.</title>
        <authorList>
            <person name="Cheng C.Y."/>
            <person name="Krishnakumar V."/>
            <person name="Chan A.P."/>
            <person name="Thibaud-Nissen F."/>
            <person name="Schobel S."/>
            <person name="Town C.D."/>
        </authorList>
    </citation>
    <scope>GENOME REANNOTATION</scope>
    <source>
        <strain>cv. Columbia</strain>
    </source>
</reference>
<reference key="3">
    <citation type="journal article" date="2003" name="Science">
        <title>Empirical analysis of transcriptional activity in the Arabidopsis genome.</title>
        <authorList>
            <person name="Yamada K."/>
            <person name="Lim J."/>
            <person name="Dale J.M."/>
            <person name="Chen H."/>
            <person name="Shinn P."/>
            <person name="Palm C.J."/>
            <person name="Southwick A.M."/>
            <person name="Wu H.C."/>
            <person name="Kim C.J."/>
            <person name="Nguyen M."/>
            <person name="Pham P.K."/>
            <person name="Cheuk R.F."/>
            <person name="Karlin-Newmann G."/>
            <person name="Liu S.X."/>
            <person name="Lam B."/>
            <person name="Sakano H."/>
            <person name="Wu T."/>
            <person name="Yu G."/>
            <person name="Miranda M."/>
            <person name="Quach H.L."/>
            <person name="Tripp M."/>
            <person name="Chang C.H."/>
            <person name="Lee J.M."/>
            <person name="Toriumi M.J."/>
            <person name="Chan M.M."/>
            <person name="Tang C.C."/>
            <person name="Onodera C.S."/>
            <person name="Deng J.M."/>
            <person name="Akiyama K."/>
            <person name="Ansari Y."/>
            <person name="Arakawa T."/>
            <person name="Banh J."/>
            <person name="Banno F."/>
            <person name="Bowser L."/>
            <person name="Brooks S.Y."/>
            <person name="Carninci P."/>
            <person name="Chao Q."/>
            <person name="Choy N."/>
            <person name="Enju A."/>
            <person name="Goldsmith A.D."/>
            <person name="Gurjal M."/>
            <person name="Hansen N.F."/>
            <person name="Hayashizaki Y."/>
            <person name="Johnson-Hopson C."/>
            <person name="Hsuan V.W."/>
            <person name="Iida K."/>
            <person name="Karnes M."/>
            <person name="Khan S."/>
            <person name="Koesema E."/>
            <person name="Ishida J."/>
            <person name="Jiang P.X."/>
            <person name="Jones T."/>
            <person name="Kawai J."/>
            <person name="Kamiya A."/>
            <person name="Meyers C."/>
            <person name="Nakajima M."/>
            <person name="Narusaka M."/>
            <person name="Seki M."/>
            <person name="Sakurai T."/>
            <person name="Satou M."/>
            <person name="Tamse R."/>
            <person name="Vaysberg M."/>
            <person name="Wallender E.K."/>
            <person name="Wong C."/>
            <person name="Yamamura Y."/>
            <person name="Yuan S."/>
            <person name="Shinozaki K."/>
            <person name="Davis R.W."/>
            <person name="Theologis A."/>
            <person name="Ecker J.R."/>
        </authorList>
    </citation>
    <scope>NUCLEOTIDE SEQUENCE [LARGE SCALE MRNA] (ISOFORM 2)</scope>
    <source>
        <strain>cv. Columbia</strain>
    </source>
</reference>
<reference key="4">
    <citation type="journal article" date="2009" name="DNA Res.">
        <title>Analysis of multiple occurrences of alternative splicing events in Arabidopsis thaliana using novel sequenced full-length cDNAs.</title>
        <authorList>
            <person name="Iida K."/>
            <person name="Fukami-Kobayashi K."/>
            <person name="Toyoda A."/>
            <person name="Sakaki Y."/>
            <person name="Kobayashi M."/>
            <person name="Seki M."/>
            <person name="Shinozaki K."/>
        </authorList>
    </citation>
    <scope>NUCLEOTIDE SEQUENCE [LARGE SCALE MRNA] (ISOFORM 1)</scope>
    <source>
        <strain>cv. Columbia</strain>
    </source>
</reference>
<reference key="5">
    <citation type="journal article" date="2006" name="J. Biol. Chem.">
        <title>The Arabidopsis protein kinase PTI1-2 is activated by convergent phosphatidic acid and oxidative stress signaling pathways downstream of PDK1 and OXI1.</title>
        <authorList>
            <person name="Anthony R.G."/>
            <person name="Khan S."/>
            <person name="Costa J."/>
            <person name="Pais M.S."/>
            <person name="Boegre L."/>
        </authorList>
    </citation>
    <scope>INTERACTION WITH OXI1</scope>
    <scope>PHOSPHORYLATION BY OXI1</scope>
</reference>
<reference key="6">
    <citation type="journal article" date="2007" name="Mol. Cell. Proteomics">
        <title>A high content in lipid-modified peripheral proteins and integral receptor kinases features in the arabidopsis plasma membrane proteome.</title>
        <authorList>
            <person name="Marmagne A."/>
            <person name="Ferro M."/>
            <person name="Meinnel T."/>
            <person name="Bruley C."/>
            <person name="Kuhn L."/>
            <person name="Garin J."/>
            <person name="Barbier-Brygoo H."/>
            <person name="Ephritikhine G."/>
        </authorList>
    </citation>
    <scope>IDENTIFICATION BY MASS SPECTROMETRY</scope>
    <scope>SUBCELLULAR LOCATION [LARGE SCALE ANALYSIS]</scope>
</reference>
<protein>
    <recommendedName>
        <fullName>PTI1-like tyrosine-protein kinase 3</fullName>
        <shortName>PTI1-3</shortName>
        <ecNumber>2.7.10.2</ecNumber>
    </recommendedName>
</protein>